<organism>
    <name type="scientific">Mus musculus</name>
    <name type="common">Mouse</name>
    <dbReference type="NCBI Taxonomy" id="10090"/>
    <lineage>
        <taxon>Eukaryota</taxon>
        <taxon>Metazoa</taxon>
        <taxon>Chordata</taxon>
        <taxon>Craniata</taxon>
        <taxon>Vertebrata</taxon>
        <taxon>Euteleostomi</taxon>
        <taxon>Mammalia</taxon>
        <taxon>Eutheria</taxon>
        <taxon>Euarchontoglires</taxon>
        <taxon>Glires</taxon>
        <taxon>Rodentia</taxon>
        <taxon>Myomorpha</taxon>
        <taxon>Muroidea</taxon>
        <taxon>Muridae</taxon>
        <taxon>Murinae</taxon>
        <taxon>Mus</taxon>
        <taxon>Mus</taxon>
    </lineage>
</organism>
<keyword id="KW-0378">Hydrolase</keyword>
<keyword id="KW-0645">Protease</keyword>
<keyword id="KW-1185">Reference proteome</keyword>
<keyword id="KW-0788">Thiol protease</keyword>
<keyword id="KW-0833">Ubl conjugation pathway</keyword>
<reference key="1">
    <citation type="journal article" date="2009" name="PLoS Biol.">
        <title>Lineage-specific biology revealed by a finished genome assembly of the mouse.</title>
        <authorList>
            <person name="Church D.M."/>
            <person name="Goodstadt L."/>
            <person name="Hillier L.W."/>
            <person name="Zody M.C."/>
            <person name="Goldstein S."/>
            <person name="She X."/>
            <person name="Bult C.J."/>
            <person name="Agarwala R."/>
            <person name="Cherry J.L."/>
            <person name="DiCuccio M."/>
            <person name="Hlavina W."/>
            <person name="Kapustin Y."/>
            <person name="Meric P."/>
            <person name="Maglott D."/>
            <person name="Birtle Z."/>
            <person name="Marques A.C."/>
            <person name="Graves T."/>
            <person name="Zhou S."/>
            <person name="Teague B."/>
            <person name="Potamousis K."/>
            <person name="Churas C."/>
            <person name="Place M."/>
            <person name="Herschleb J."/>
            <person name="Runnheim R."/>
            <person name="Forrest D."/>
            <person name="Amos-Landgraf J."/>
            <person name="Schwartz D.C."/>
            <person name="Cheng Z."/>
            <person name="Lindblad-Toh K."/>
            <person name="Eichler E.E."/>
            <person name="Ponting C.P."/>
        </authorList>
    </citation>
    <scope>NUCLEOTIDE SEQUENCE [LARGE SCALE GENOMIC DNA]</scope>
    <source>
        <strain>C57BL/6J</strain>
    </source>
</reference>
<reference key="2">
    <citation type="journal article" date="2005" name="Science">
        <title>The transcriptional landscape of the mammalian genome.</title>
        <authorList>
            <person name="Carninci P."/>
            <person name="Kasukawa T."/>
            <person name="Katayama S."/>
            <person name="Gough J."/>
            <person name="Frith M.C."/>
            <person name="Maeda N."/>
            <person name="Oyama R."/>
            <person name="Ravasi T."/>
            <person name="Lenhard B."/>
            <person name="Wells C."/>
            <person name="Kodzius R."/>
            <person name="Shimokawa K."/>
            <person name="Bajic V.B."/>
            <person name="Brenner S.E."/>
            <person name="Batalov S."/>
            <person name="Forrest A.R."/>
            <person name="Zavolan M."/>
            <person name="Davis M.J."/>
            <person name="Wilming L.G."/>
            <person name="Aidinis V."/>
            <person name="Allen J.E."/>
            <person name="Ambesi-Impiombato A."/>
            <person name="Apweiler R."/>
            <person name="Aturaliya R.N."/>
            <person name="Bailey T.L."/>
            <person name="Bansal M."/>
            <person name="Baxter L."/>
            <person name="Beisel K.W."/>
            <person name="Bersano T."/>
            <person name="Bono H."/>
            <person name="Chalk A.M."/>
            <person name="Chiu K.P."/>
            <person name="Choudhary V."/>
            <person name="Christoffels A."/>
            <person name="Clutterbuck D.R."/>
            <person name="Crowe M.L."/>
            <person name="Dalla E."/>
            <person name="Dalrymple B.P."/>
            <person name="de Bono B."/>
            <person name="Della Gatta G."/>
            <person name="di Bernardo D."/>
            <person name="Down T."/>
            <person name="Engstrom P."/>
            <person name="Fagiolini M."/>
            <person name="Faulkner G."/>
            <person name="Fletcher C.F."/>
            <person name="Fukushima T."/>
            <person name="Furuno M."/>
            <person name="Futaki S."/>
            <person name="Gariboldi M."/>
            <person name="Georgii-Hemming P."/>
            <person name="Gingeras T.R."/>
            <person name="Gojobori T."/>
            <person name="Green R.E."/>
            <person name="Gustincich S."/>
            <person name="Harbers M."/>
            <person name="Hayashi Y."/>
            <person name="Hensch T.K."/>
            <person name="Hirokawa N."/>
            <person name="Hill D."/>
            <person name="Huminiecki L."/>
            <person name="Iacono M."/>
            <person name="Ikeo K."/>
            <person name="Iwama A."/>
            <person name="Ishikawa T."/>
            <person name="Jakt M."/>
            <person name="Kanapin A."/>
            <person name="Katoh M."/>
            <person name="Kawasawa Y."/>
            <person name="Kelso J."/>
            <person name="Kitamura H."/>
            <person name="Kitano H."/>
            <person name="Kollias G."/>
            <person name="Krishnan S.P."/>
            <person name="Kruger A."/>
            <person name="Kummerfeld S.K."/>
            <person name="Kurochkin I.V."/>
            <person name="Lareau L.F."/>
            <person name="Lazarevic D."/>
            <person name="Lipovich L."/>
            <person name="Liu J."/>
            <person name="Liuni S."/>
            <person name="McWilliam S."/>
            <person name="Madan Babu M."/>
            <person name="Madera M."/>
            <person name="Marchionni L."/>
            <person name="Matsuda H."/>
            <person name="Matsuzawa S."/>
            <person name="Miki H."/>
            <person name="Mignone F."/>
            <person name="Miyake S."/>
            <person name="Morris K."/>
            <person name="Mottagui-Tabar S."/>
            <person name="Mulder N."/>
            <person name="Nakano N."/>
            <person name="Nakauchi H."/>
            <person name="Ng P."/>
            <person name="Nilsson R."/>
            <person name="Nishiguchi S."/>
            <person name="Nishikawa S."/>
            <person name="Nori F."/>
            <person name="Ohara O."/>
            <person name="Okazaki Y."/>
            <person name="Orlando V."/>
            <person name="Pang K.C."/>
            <person name="Pavan W.J."/>
            <person name="Pavesi G."/>
            <person name="Pesole G."/>
            <person name="Petrovsky N."/>
            <person name="Piazza S."/>
            <person name="Reed J."/>
            <person name="Reid J.F."/>
            <person name="Ring B.Z."/>
            <person name="Ringwald M."/>
            <person name="Rost B."/>
            <person name="Ruan Y."/>
            <person name="Salzberg S.L."/>
            <person name="Sandelin A."/>
            <person name="Schneider C."/>
            <person name="Schoenbach C."/>
            <person name="Sekiguchi K."/>
            <person name="Semple C.A."/>
            <person name="Seno S."/>
            <person name="Sessa L."/>
            <person name="Sheng Y."/>
            <person name="Shibata Y."/>
            <person name="Shimada H."/>
            <person name="Shimada K."/>
            <person name="Silva D."/>
            <person name="Sinclair B."/>
            <person name="Sperling S."/>
            <person name="Stupka E."/>
            <person name="Sugiura K."/>
            <person name="Sultana R."/>
            <person name="Takenaka Y."/>
            <person name="Taki K."/>
            <person name="Tammoja K."/>
            <person name="Tan S.L."/>
            <person name="Tang S."/>
            <person name="Taylor M.S."/>
            <person name="Tegner J."/>
            <person name="Teichmann S.A."/>
            <person name="Ueda H.R."/>
            <person name="van Nimwegen E."/>
            <person name="Verardo R."/>
            <person name="Wei C.L."/>
            <person name="Yagi K."/>
            <person name="Yamanishi H."/>
            <person name="Zabarovsky E."/>
            <person name="Zhu S."/>
            <person name="Zimmer A."/>
            <person name="Hide W."/>
            <person name="Bult C."/>
            <person name="Grimmond S.M."/>
            <person name="Teasdale R.D."/>
            <person name="Liu E.T."/>
            <person name="Brusic V."/>
            <person name="Quackenbush J."/>
            <person name="Wahlestedt C."/>
            <person name="Mattick J.S."/>
            <person name="Hume D.A."/>
            <person name="Kai C."/>
            <person name="Sasaki D."/>
            <person name="Tomaru Y."/>
            <person name="Fukuda S."/>
            <person name="Kanamori-Katayama M."/>
            <person name="Suzuki M."/>
            <person name="Aoki J."/>
            <person name="Arakawa T."/>
            <person name="Iida J."/>
            <person name="Imamura K."/>
            <person name="Itoh M."/>
            <person name="Kato T."/>
            <person name="Kawaji H."/>
            <person name="Kawagashira N."/>
            <person name="Kawashima T."/>
            <person name="Kojima M."/>
            <person name="Kondo S."/>
            <person name="Konno H."/>
            <person name="Nakano K."/>
            <person name="Ninomiya N."/>
            <person name="Nishio T."/>
            <person name="Okada M."/>
            <person name="Plessy C."/>
            <person name="Shibata K."/>
            <person name="Shiraki T."/>
            <person name="Suzuki S."/>
            <person name="Tagami M."/>
            <person name="Waki K."/>
            <person name="Watahiki A."/>
            <person name="Okamura-Oho Y."/>
            <person name="Suzuki H."/>
            <person name="Kawai J."/>
            <person name="Hayashizaki Y."/>
        </authorList>
    </citation>
    <scope>NUCLEOTIDE SEQUENCE [LARGE SCALE MRNA] OF 232-454</scope>
    <source>
        <strain>C57BL/6J</strain>
        <tissue>Testis</tissue>
    </source>
</reference>
<reference key="3">
    <citation type="journal article" date="2010" name="Cell">
        <title>A tissue-specific atlas of mouse protein phosphorylation and expression.</title>
        <authorList>
            <person name="Huttlin E.L."/>
            <person name="Jedrychowski M.P."/>
            <person name="Elias J.E."/>
            <person name="Goswami T."/>
            <person name="Rad R."/>
            <person name="Beausoleil S.A."/>
            <person name="Villen J."/>
            <person name="Haas W."/>
            <person name="Sowa M.E."/>
            <person name="Gygi S.P."/>
        </authorList>
    </citation>
    <scope>IDENTIFICATION BY MASS SPECTROMETRY [LARGE SCALE ANALYSIS]</scope>
    <source>
        <tissue>Spleen</tissue>
    </source>
</reference>
<proteinExistence type="evidence at protein level"/>
<protein>
    <recommendedName>
        <fullName>OTU domain-containing protein 1</fullName>
        <ecNumber evidence="1">3.4.19.12</ecNumber>
    </recommendedName>
</protein>
<gene>
    <name type="primary">Otud1</name>
</gene>
<feature type="chain" id="PRO_0000271019" description="OTU domain-containing protein 1">
    <location>
        <begin position="1"/>
        <end position="454"/>
    </location>
</feature>
<feature type="domain" description="OTU" evidence="4">
    <location>
        <begin position="282"/>
        <end position="411"/>
    </location>
</feature>
<feature type="domain" description="UIM" evidence="6">
    <location>
        <begin position="430"/>
        <end position="449"/>
    </location>
</feature>
<feature type="region of interest" description="Disordered" evidence="5">
    <location>
        <begin position="36"/>
        <end position="64"/>
    </location>
</feature>
<feature type="region of interest" description="Disordered" evidence="5">
    <location>
        <begin position="116"/>
        <end position="257"/>
    </location>
</feature>
<feature type="region of interest" description="Cys-loop" evidence="1">
    <location>
        <begin position="287"/>
        <end position="293"/>
    </location>
</feature>
<feature type="region of interest" description="His-loop" evidence="1">
    <location>
        <begin position="342"/>
        <end position="352"/>
    </location>
</feature>
<feature type="region of interest" description="Variable-loop" evidence="1">
    <location>
        <begin position="399"/>
        <end position="404"/>
    </location>
</feature>
<feature type="compositionally biased region" description="Low complexity" evidence="5">
    <location>
        <begin position="52"/>
        <end position="64"/>
    </location>
</feature>
<feature type="compositionally biased region" description="Pro residues" evidence="5">
    <location>
        <begin position="116"/>
        <end position="125"/>
    </location>
</feature>
<feature type="compositionally biased region" description="Basic and acidic residues" evidence="5">
    <location>
        <begin position="151"/>
        <end position="164"/>
    </location>
</feature>
<feature type="compositionally biased region" description="Basic and acidic residues" evidence="5">
    <location>
        <begin position="193"/>
        <end position="210"/>
    </location>
</feature>
<feature type="compositionally biased region" description="Basic and acidic residues" evidence="5">
    <location>
        <begin position="219"/>
        <end position="229"/>
    </location>
</feature>
<feature type="active site" evidence="3">
    <location>
        <position position="290"/>
    </location>
</feature>
<feature type="active site" description="Nucleophile" evidence="2">
    <location>
        <position position="293"/>
    </location>
</feature>
<feature type="active site" evidence="2">
    <location>
        <position position="404"/>
    </location>
</feature>
<comment type="function">
    <text evidence="1">Deubiquitinating enzyme that specifically hydrolyzes 'Lys-63'-linked polyubiquitin to monoubiquitin. Required for the stability and translation of a subset mRNAs with a high abundance of rare codons by mediating deubiquitination of 40S ribosomal protein RPS10/eS10, thereby antagonizing ZNF598-mediated 40S ubiquitination. The abundance of rare codons in mRNAs can limit the translation rate and can lead to ribosome collisions that trigger activation of ribosome quality control (RQC) pathway by ZNF598. OTUD1-mediated deubiquitination prevents activation of the RQC and subsequent dissociation of ribosomes and stimulates formation of polysomes and translation.</text>
</comment>
<comment type="catalytic activity">
    <reaction evidence="1">
        <text>Thiol-dependent hydrolysis of ester, thioester, amide, peptide and isopeptide bonds formed by the C-terminal Gly of ubiquitin (a 76-residue protein attached to proteins as an intracellular targeting signal).</text>
        <dbReference type="EC" id="3.4.19.12"/>
    </reaction>
</comment>
<comment type="domain">
    <text evidence="1">The UIM repeat increases the specificity and efficiency of the enzyme toward 'Lys-63'-linked polyubiquitin.</text>
</comment>
<comment type="domain">
    <text evidence="1">Specificity is not given by the S1' ubiquitin-binding site within the OTU domain (composed of the Cys-, His- and Variable-loops).</text>
</comment>
<comment type="sequence caution" evidence="6">
    <conflict type="frameshift">
        <sequence resource="EMBL-CDS" id="BAB30530"/>
    </conflict>
</comment>
<dbReference type="EC" id="3.4.19.12" evidence="1"/>
<dbReference type="EMBL" id="AL928877">
    <property type="status" value="NOT_ANNOTATED_CDS"/>
    <property type="molecule type" value="Genomic_DNA"/>
</dbReference>
<dbReference type="EMBL" id="AK016972">
    <property type="protein sequence ID" value="BAB30530.1"/>
    <property type="status" value="ALT_FRAME"/>
    <property type="molecule type" value="mRNA"/>
</dbReference>
<dbReference type="CCDS" id="CCDS50508.1"/>
<dbReference type="RefSeq" id="NP_081991.1">
    <property type="nucleotide sequence ID" value="NM_027715.2"/>
</dbReference>
<dbReference type="SMR" id="Q9CUB6"/>
<dbReference type="BioGRID" id="214546">
    <property type="interactions" value="3"/>
</dbReference>
<dbReference type="FunCoup" id="Q9CUB6">
    <property type="interactions" value="10"/>
</dbReference>
<dbReference type="IntAct" id="Q9CUB6">
    <property type="interactions" value="1"/>
</dbReference>
<dbReference type="MINT" id="Q9CUB6"/>
<dbReference type="STRING" id="10090.ENSMUSP00000100617"/>
<dbReference type="MEROPS" id="C85.004"/>
<dbReference type="GlyGen" id="Q9CUB6">
    <property type="glycosylation" value="2 sites"/>
</dbReference>
<dbReference type="iPTMnet" id="Q9CUB6"/>
<dbReference type="PhosphoSitePlus" id="Q9CUB6"/>
<dbReference type="jPOST" id="Q9CUB6"/>
<dbReference type="PaxDb" id="10090-ENSMUSP00000100617"/>
<dbReference type="ProteomicsDB" id="294405"/>
<dbReference type="Antibodypedia" id="51774">
    <property type="antibodies" value="76 antibodies from 14 providers"/>
</dbReference>
<dbReference type="Ensembl" id="ENSMUST00000052168.6">
    <property type="protein sequence ID" value="ENSMUSP00000100617.3"/>
    <property type="gene ID" value="ENSMUSG00000043415.6"/>
</dbReference>
<dbReference type="GeneID" id="71198"/>
<dbReference type="KEGG" id="mmu:71198"/>
<dbReference type="UCSC" id="uc008imj.2">
    <property type="organism name" value="mouse"/>
</dbReference>
<dbReference type="AGR" id="MGI:1918448"/>
<dbReference type="CTD" id="220213"/>
<dbReference type="MGI" id="MGI:1918448">
    <property type="gene designation" value="Otud1"/>
</dbReference>
<dbReference type="VEuPathDB" id="HostDB:ENSMUSG00000043415"/>
<dbReference type="eggNOG" id="KOG2605">
    <property type="taxonomic scope" value="Eukaryota"/>
</dbReference>
<dbReference type="GeneTree" id="ENSGT00510000049635"/>
<dbReference type="HOGENOM" id="CLU_044163_0_0_1"/>
<dbReference type="InParanoid" id="Q9CUB6"/>
<dbReference type="OMA" id="CTHYPSG"/>
<dbReference type="OrthoDB" id="409956at2759"/>
<dbReference type="PhylomeDB" id="Q9CUB6"/>
<dbReference type="TreeFam" id="TF338508"/>
<dbReference type="Reactome" id="R-MMU-5357786">
    <property type="pathway name" value="TNFR1-induced proapoptotic signaling"/>
</dbReference>
<dbReference type="Reactome" id="R-MMU-5357905">
    <property type="pathway name" value="Regulation of TNFR1 signaling"/>
</dbReference>
<dbReference type="Reactome" id="R-MMU-5357956">
    <property type="pathway name" value="TNFR1-induced NF-kappa-B signaling pathway"/>
</dbReference>
<dbReference type="BioGRID-ORCS" id="71198">
    <property type="hits" value="1 hit in 79 CRISPR screens"/>
</dbReference>
<dbReference type="ChiTaRS" id="Otud1">
    <property type="organism name" value="mouse"/>
</dbReference>
<dbReference type="PRO" id="PR:Q9CUB6"/>
<dbReference type="Proteomes" id="UP000000589">
    <property type="component" value="Chromosome 2"/>
</dbReference>
<dbReference type="RNAct" id="Q9CUB6">
    <property type="molecule type" value="protein"/>
</dbReference>
<dbReference type="Bgee" id="ENSMUSG00000043415">
    <property type="expression patterns" value="Expressed in ascending aorta and 204 other cell types or tissues"/>
</dbReference>
<dbReference type="GO" id="GO:0004843">
    <property type="term" value="F:cysteine-type deubiquitinase activity"/>
    <property type="evidence" value="ECO:0000250"/>
    <property type="project" value="UniProtKB"/>
</dbReference>
<dbReference type="GO" id="GO:0070536">
    <property type="term" value="P:protein K63-linked deubiquitination"/>
    <property type="evidence" value="ECO:0000250"/>
    <property type="project" value="UniProtKB"/>
</dbReference>
<dbReference type="GO" id="GO:0006508">
    <property type="term" value="P:proteolysis"/>
    <property type="evidence" value="ECO:0007669"/>
    <property type="project" value="UniProtKB-KW"/>
</dbReference>
<dbReference type="CDD" id="cd22747">
    <property type="entry name" value="OTU_OTUD1"/>
    <property type="match status" value="1"/>
</dbReference>
<dbReference type="FunFam" id="3.90.70.80:FF:000010">
    <property type="entry name" value="OTU domain-containing protein 1"/>
    <property type="match status" value="1"/>
</dbReference>
<dbReference type="Gene3D" id="3.90.70.80">
    <property type="match status" value="1"/>
</dbReference>
<dbReference type="InterPro" id="IPR003323">
    <property type="entry name" value="OTU_dom"/>
</dbReference>
<dbReference type="InterPro" id="IPR047834">
    <property type="entry name" value="OTUD1_OTU"/>
</dbReference>
<dbReference type="InterPro" id="IPR038765">
    <property type="entry name" value="Papain-like_cys_pep_sf"/>
</dbReference>
<dbReference type="InterPro" id="IPR050704">
    <property type="entry name" value="Peptidase_C85-like"/>
</dbReference>
<dbReference type="PANTHER" id="PTHR12419">
    <property type="entry name" value="OTU DOMAIN CONTAINING PROTEIN"/>
    <property type="match status" value="1"/>
</dbReference>
<dbReference type="PANTHER" id="PTHR12419:SF101">
    <property type="entry name" value="OTU DOMAIN-CONTAINING PROTEIN 1"/>
    <property type="match status" value="1"/>
</dbReference>
<dbReference type="Pfam" id="PF02338">
    <property type="entry name" value="OTU"/>
    <property type="match status" value="1"/>
</dbReference>
<dbReference type="SUPFAM" id="SSF54001">
    <property type="entry name" value="Cysteine proteinases"/>
    <property type="match status" value="1"/>
</dbReference>
<dbReference type="PROSITE" id="PS50802">
    <property type="entry name" value="OTU"/>
    <property type="match status" value="1"/>
</dbReference>
<name>OTUD1_MOUSE</name>
<sequence length="454" mass="48823">MQLYSSVCTHYPAGTPGPTAAAPPATAAAAFKVSLQSASPAAAAPEPDTGERPPAAATEPREAAAAAAMPAFSACFERSGSAAAPPGACSKPPLPPHFTSTAHIAVRALGAERLLLPPPSAPSPPRRGSSAWLLEELLRPDEPAAPNAVRDAPDRNFRLSEHRQALAASQHRAPAPAPVGPEPGAGPGSGPWGEERRAERSSRGWDRASGRSDASGSDALRRQDPEAEAHPVPAPARSSGEPAQNGEGEAVGTSRADPRDEKLALYLAEVERQDKYLRQRNKYRFHIIPDGNCLYRAVSKTVYGDQSLHRELREQTVHYIADHLDHFSPLIEGDVGEFIIAAAQDGAWAGYPELLAMGQMLNVNIHLTTGGRLESPTVSTMIHYLGPEDSLRPSIWLSWLSNGHYDAVFDHSYPNPEYDNWCKQTQIQKKRDEELAKSMAISLSKMYIEQNACS</sequence>
<evidence type="ECO:0000250" key="1">
    <source>
        <dbReference type="UniProtKB" id="Q5VV17"/>
    </source>
</evidence>
<evidence type="ECO:0000250" key="2">
    <source>
        <dbReference type="UniProtKB" id="Q5VVQ6"/>
    </source>
</evidence>
<evidence type="ECO:0000250" key="3">
    <source>
        <dbReference type="UniProtKB" id="Q96FW1"/>
    </source>
</evidence>
<evidence type="ECO:0000255" key="4">
    <source>
        <dbReference type="PROSITE-ProRule" id="PRU00139"/>
    </source>
</evidence>
<evidence type="ECO:0000256" key="5">
    <source>
        <dbReference type="SAM" id="MobiDB-lite"/>
    </source>
</evidence>
<evidence type="ECO:0000305" key="6"/>
<accession>Q9CUB6</accession>
<accession>A2ATK4</accession>